<name>YQGF_TROWT</name>
<organism>
    <name type="scientific">Tropheryma whipplei (strain Twist)</name>
    <name type="common">Whipple's bacillus</name>
    <dbReference type="NCBI Taxonomy" id="203267"/>
    <lineage>
        <taxon>Bacteria</taxon>
        <taxon>Bacillati</taxon>
        <taxon>Actinomycetota</taxon>
        <taxon>Actinomycetes</taxon>
        <taxon>Micrococcales</taxon>
        <taxon>Tropherymataceae</taxon>
        <taxon>Tropheryma</taxon>
    </lineage>
</organism>
<comment type="function">
    <text evidence="1">Could be a nuclease involved in processing of the 5'-end of pre-16S rRNA.</text>
</comment>
<comment type="subcellular location">
    <subcellularLocation>
        <location evidence="1">Cytoplasm</location>
    </subcellularLocation>
</comment>
<comment type="similarity">
    <text evidence="1">Belongs to the YqgF nuclease family.</text>
</comment>
<keyword id="KW-0963">Cytoplasm</keyword>
<keyword id="KW-0378">Hydrolase</keyword>
<keyword id="KW-0540">Nuclease</keyword>
<keyword id="KW-1185">Reference proteome</keyword>
<keyword id="KW-0690">Ribosome biogenesis</keyword>
<gene>
    <name type="ordered locus">TWT_375</name>
</gene>
<reference key="1">
    <citation type="journal article" date="2003" name="Genome Res.">
        <title>Tropheryma whipplei twist: a human pathogenic Actinobacteria with a reduced genome.</title>
        <authorList>
            <person name="Raoult D."/>
            <person name="Ogata H."/>
            <person name="Audic S."/>
            <person name="Robert C."/>
            <person name="Suhre K."/>
            <person name="Drancourt M."/>
            <person name="Claverie J.-M."/>
        </authorList>
    </citation>
    <scope>NUCLEOTIDE SEQUENCE [LARGE SCALE GENOMIC DNA]</scope>
    <source>
        <strain>Twist</strain>
    </source>
</reference>
<evidence type="ECO:0000255" key="1">
    <source>
        <dbReference type="HAMAP-Rule" id="MF_00651"/>
    </source>
</evidence>
<protein>
    <recommendedName>
        <fullName evidence="1">Putative pre-16S rRNA nuclease</fullName>
        <ecNumber evidence="1">3.1.-.-</ecNumber>
    </recommendedName>
</protein>
<dbReference type="EC" id="3.1.-.-" evidence="1"/>
<dbReference type="EMBL" id="AE014184">
    <property type="protein sequence ID" value="AAO44472.1"/>
    <property type="molecule type" value="Genomic_DNA"/>
</dbReference>
<dbReference type="SMR" id="Q83GD2"/>
<dbReference type="STRING" id="203267.TWT_375"/>
<dbReference type="KEGG" id="twh:TWT_375"/>
<dbReference type="eggNOG" id="COG0816">
    <property type="taxonomic scope" value="Bacteria"/>
</dbReference>
<dbReference type="HOGENOM" id="CLU_098240_0_0_11"/>
<dbReference type="OrthoDB" id="9790539at2"/>
<dbReference type="Proteomes" id="UP000002200">
    <property type="component" value="Chromosome"/>
</dbReference>
<dbReference type="GO" id="GO:0005829">
    <property type="term" value="C:cytosol"/>
    <property type="evidence" value="ECO:0007669"/>
    <property type="project" value="TreeGrafter"/>
</dbReference>
<dbReference type="GO" id="GO:0004518">
    <property type="term" value="F:nuclease activity"/>
    <property type="evidence" value="ECO:0007669"/>
    <property type="project" value="UniProtKB-KW"/>
</dbReference>
<dbReference type="GO" id="GO:0000967">
    <property type="term" value="P:rRNA 5'-end processing"/>
    <property type="evidence" value="ECO:0007669"/>
    <property type="project" value="UniProtKB-UniRule"/>
</dbReference>
<dbReference type="CDD" id="cd16964">
    <property type="entry name" value="YqgF"/>
    <property type="match status" value="1"/>
</dbReference>
<dbReference type="Gene3D" id="3.30.420.140">
    <property type="entry name" value="YqgF/RNase H-like domain"/>
    <property type="match status" value="1"/>
</dbReference>
<dbReference type="HAMAP" id="MF_00651">
    <property type="entry name" value="Nuclease_YqgF"/>
    <property type="match status" value="1"/>
</dbReference>
<dbReference type="InterPro" id="IPR012337">
    <property type="entry name" value="RNaseH-like_sf"/>
</dbReference>
<dbReference type="InterPro" id="IPR005227">
    <property type="entry name" value="YqgF"/>
</dbReference>
<dbReference type="InterPro" id="IPR006641">
    <property type="entry name" value="YqgF/RNaseH-like_dom"/>
</dbReference>
<dbReference type="InterPro" id="IPR037027">
    <property type="entry name" value="YqgF/RNaseH-like_dom_sf"/>
</dbReference>
<dbReference type="NCBIfam" id="TIGR00250">
    <property type="entry name" value="RNAse_H_YqgF"/>
    <property type="match status" value="1"/>
</dbReference>
<dbReference type="PANTHER" id="PTHR33317">
    <property type="entry name" value="POLYNUCLEOTIDYL TRANSFERASE, RIBONUCLEASE H-LIKE SUPERFAMILY PROTEIN"/>
    <property type="match status" value="1"/>
</dbReference>
<dbReference type="PANTHER" id="PTHR33317:SF4">
    <property type="entry name" value="POLYNUCLEOTIDYL TRANSFERASE, RIBONUCLEASE H-LIKE SUPERFAMILY PROTEIN"/>
    <property type="match status" value="1"/>
</dbReference>
<dbReference type="Pfam" id="PF03652">
    <property type="entry name" value="RuvX"/>
    <property type="match status" value="1"/>
</dbReference>
<dbReference type="SMART" id="SM00732">
    <property type="entry name" value="YqgFc"/>
    <property type="match status" value="1"/>
</dbReference>
<dbReference type="SUPFAM" id="SSF53098">
    <property type="entry name" value="Ribonuclease H-like"/>
    <property type="match status" value="1"/>
</dbReference>
<feature type="chain" id="PRO_0000172167" description="Putative pre-16S rRNA nuclease">
    <location>
        <begin position="1"/>
        <end position="145"/>
    </location>
</feature>
<proteinExistence type="inferred from homology"/>
<sequence length="145" mass="15923">MVKSVADRFFLGLDFGSTRIGVARNCGSLAVPVGVLPRASCAEILGYISRYSIDEVVIGLPLTLAGKEKQSARLAKEFSRFLVSSGVQVRFFDERFTTVIATQKFYSLGKGVKQIRKCVDAAAATVMLQLFLDMEVKVDPLERKP</sequence>
<accession>Q83GD2</accession>